<accession>B3R6U7</accession>
<feature type="chain" id="PRO_1000138949" description="Orotidine 5'-phosphate decarboxylase">
    <location>
        <begin position="1"/>
        <end position="272"/>
    </location>
</feature>
<feature type="active site" description="Proton donor" evidence="1">
    <location>
        <position position="95"/>
    </location>
</feature>
<name>PYRF_CUPTR</name>
<organism>
    <name type="scientific">Cupriavidus taiwanensis (strain DSM 17343 / BCRC 17206 / CCUG 44338 / CIP 107171 / LMG 19424 / R1)</name>
    <name type="common">Ralstonia taiwanensis (strain LMG 19424)</name>
    <dbReference type="NCBI Taxonomy" id="977880"/>
    <lineage>
        <taxon>Bacteria</taxon>
        <taxon>Pseudomonadati</taxon>
        <taxon>Pseudomonadota</taxon>
        <taxon>Betaproteobacteria</taxon>
        <taxon>Burkholderiales</taxon>
        <taxon>Burkholderiaceae</taxon>
        <taxon>Cupriavidus</taxon>
    </lineage>
</organism>
<protein>
    <recommendedName>
        <fullName evidence="1">Orotidine 5'-phosphate decarboxylase</fullName>
        <ecNumber evidence="1">4.1.1.23</ecNumber>
    </recommendedName>
    <alternativeName>
        <fullName evidence="1">OMP decarboxylase</fullName>
        <shortName evidence="1">OMPDCase</shortName>
        <shortName evidence="1">OMPdecase</shortName>
    </alternativeName>
</protein>
<comment type="catalytic activity">
    <reaction evidence="1">
        <text>orotidine 5'-phosphate + H(+) = UMP + CO2</text>
        <dbReference type="Rhea" id="RHEA:11596"/>
        <dbReference type="ChEBI" id="CHEBI:15378"/>
        <dbReference type="ChEBI" id="CHEBI:16526"/>
        <dbReference type="ChEBI" id="CHEBI:57538"/>
        <dbReference type="ChEBI" id="CHEBI:57865"/>
        <dbReference type="EC" id="4.1.1.23"/>
    </reaction>
</comment>
<comment type="pathway">
    <text evidence="1">Pyrimidine metabolism; UMP biosynthesis via de novo pathway; UMP from orotate: step 2/2.</text>
</comment>
<comment type="similarity">
    <text evidence="1">Belongs to the OMP decarboxylase family. Type 2 subfamily.</text>
</comment>
<reference key="1">
    <citation type="journal article" date="2008" name="Genome Res.">
        <title>Genome sequence of the beta-rhizobium Cupriavidus taiwanensis and comparative genomics of rhizobia.</title>
        <authorList>
            <person name="Amadou C."/>
            <person name="Pascal G."/>
            <person name="Mangenot S."/>
            <person name="Glew M."/>
            <person name="Bontemps C."/>
            <person name="Capela D."/>
            <person name="Carrere S."/>
            <person name="Cruveiller S."/>
            <person name="Dossat C."/>
            <person name="Lajus A."/>
            <person name="Marchetti M."/>
            <person name="Poinsot V."/>
            <person name="Rouy Z."/>
            <person name="Servin B."/>
            <person name="Saad M."/>
            <person name="Schenowitz C."/>
            <person name="Barbe V."/>
            <person name="Batut J."/>
            <person name="Medigue C."/>
            <person name="Masson-Boivin C."/>
        </authorList>
    </citation>
    <scope>NUCLEOTIDE SEQUENCE [LARGE SCALE GENOMIC DNA]</scope>
    <source>
        <strain>DSM 17343 / BCRC 17206 / CCUG 44338 / CIP 107171 / LMG 19424 / R1</strain>
    </source>
</reference>
<sequence length="272" mass="29656">MTFTEQLAAAWQRNDSLLCVGLDPDPHKLPLSLTGAGGAIFSFCREIVDATADLVCAFKPQIAYFHSQRAEDQLEQLIHYIHDAHPGIPVILDAKRGDIGSTAEHYALEAFERYKADAVTVSPYMGFDSMQPYLAYPERGVIVLCRTSNPGGSDVQFLQVDGKPLYQLVAEAARERWNTTGQMGLVVGATFPNEIARVRQIVGDMPLLIPGIGAQGGDIEATVKAGRTADGTGMMINSSRAILYASREKDFAAAARNVALQTRETINRYRHG</sequence>
<gene>
    <name evidence="1" type="primary">pyrF</name>
    <name type="ordered locus">RALTA_A2631</name>
</gene>
<proteinExistence type="inferred from homology"/>
<dbReference type="EC" id="4.1.1.23" evidence="1"/>
<dbReference type="EMBL" id="CU633749">
    <property type="protein sequence ID" value="CAQ70562.1"/>
    <property type="molecule type" value="Genomic_DNA"/>
</dbReference>
<dbReference type="RefSeq" id="WP_012353858.1">
    <property type="nucleotide sequence ID" value="NC_010528.1"/>
</dbReference>
<dbReference type="SMR" id="B3R6U7"/>
<dbReference type="GeneID" id="29763249"/>
<dbReference type="KEGG" id="cti:RALTA_A2631"/>
<dbReference type="eggNOG" id="COG0284">
    <property type="taxonomic scope" value="Bacteria"/>
</dbReference>
<dbReference type="HOGENOM" id="CLU_060704_1_0_4"/>
<dbReference type="BioCyc" id="CTAI977880:RALTA_RS12800-MONOMER"/>
<dbReference type="UniPathway" id="UPA00070">
    <property type="reaction ID" value="UER00120"/>
</dbReference>
<dbReference type="Proteomes" id="UP000001692">
    <property type="component" value="Chromosome 1"/>
</dbReference>
<dbReference type="GO" id="GO:0004590">
    <property type="term" value="F:orotidine-5'-phosphate decarboxylase activity"/>
    <property type="evidence" value="ECO:0007669"/>
    <property type="project" value="UniProtKB-UniRule"/>
</dbReference>
<dbReference type="GO" id="GO:0006207">
    <property type="term" value="P:'de novo' pyrimidine nucleobase biosynthetic process"/>
    <property type="evidence" value="ECO:0007669"/>
    <property type="project" value="InterPro"/>
</dbReference>
<dbReference type="GO" id="GO:0044205">
    <property type="term" value="P:'de novo' UMP biosynthetic process"/>
    <property type="evidence" value="ECO:0007669"/>
    <property type="project" value="UniProtKB-UniRule"/>
</dbReference>
<dbReference type="CDD" id="cd04725">
    <property type="entry name" value="OMP_decarboxylase_like"/>
    <property type="match status" value="1"/>
</dbReference>
<dbReference type="Gene3D" id="3.20.20.70">
    <property type="entry name" value="Aldolase class I"/>
    <property type="match status" value="1"/>
</dbReference>
<dbReference type="HAMAP" id="MF_01215">
    <property type="entry name" value="OMPdecase_type2"/>
    <property type="match status" value="1"/>
</dbReference>
<dbReference type="InterPro" id="IPR013785">
    <property type="entry name" value="Aldolase_TIM"/>
</dbReference>
<dbReference type="InterPro" id="IPR018089">
    <property type="entry name" value="OMPdecase_AS"/>
</dbReference>
<dbReference type="InterPro" id="IPR011995">
    <property type="entry name" value="OMPdecase_type-2"/>
</dbReference>
<dbReference type="InterPro" id="IPR001754">
    <property type="entry name" value="OMPdeCOase_dom"/>
</dbReference>
<dbReference type="InterPro" id="IPR011060">
    <property type="entry name" value="RibuloseP-bd_barrel"/>
</dbReference>
<dbReference type="NCBIfam" id="TIGR02127">
    <property type="entry name" value="pyrF_sub2"/>
    <property type="match status" value="1"/>
</dbReference>
<dbReference type="PANTHER" id="PTHR43375">
    <property type="entry name" value="OROTIDINE 5'-PHOSPHATE DECARBOXYLASE"/>
    <property type="match status" value="1"/>
</dbReference>
<dbReference type="PANTHER" id="PTHR43375:SF1">
    <property type="entry name" value="OROTIDINE 5'-PHOSPHATE DECARBOXYLASE"/>
    <property type="match status" value="1"/>
</dbReference>
<dbReference type="Pfam" id="PF00215">
    <property type="entry name" value="OMPdecase"/>
    <property type="match status" value="1"/>
</dbReference>
<dbReference type="SMART" id="SM00934">
    <property type="entry name" value="OMPdecase"/>
    <property type="match status" value="1"/>
</dbReference>
<dbReference type="SUPFAM" id="SSF51366">
    <property type="entry name" value="Ribulose-phoshate binding barrel"/>
    <property type="match status" value="1"/>
</dbReference>
<dbReference type="PROSITE" id="PS00156">
    <property type="entry name" value="OMPDECASE"/>
    <property type="match status" value="1"/>
</dbReference>
<keyword id="KW-0210">Decarboxylase</keyword>
<keyword id="KW-0456">Lyase</keyword>
<keyword id="KW-0665">Pyrimidine biosynthesis</keyword>
<evidence type="ECO:0000255" key="1">
    <source>
        <dbReference type="HAMAP-Rule" id="MF_01215"/>
    </source>
</evidence>